<sequence length="171" mass="19196">MLSHLVVGQGLYYGDSIFYAVCFLLLMWIIKVLAWKPVTKMMQDRADKISNDIDSAEKSRNDAAELVQKRQAALASSRSEAQTIVNDAKANGQQQREQIVTQAQADVQTLKQNAQKDIEQERQDALSNARNYVADLSIEIASKIIQRELKADDQKALIDSYIEGLGKQHES</sequence>
<accession>Q03QY4</accession>
<feature type="chain" id="PRO_0000368538" description="ATP synthase subunit b">
    <location>
        <begin position="1"/>
        <end position="171"/>
    </location>
</feature>
<feature type="transmembrane region" description="Helical" evidence="1">
    <location>
        <begin position="10"/>
        <end position="30"/>
    </location>
</feature>
<comment type="function">
    <text evidence="1">F(1)F(0) ATP synthase produces ATP from ADP in the presence of a proton or sodium gradient. F-type ATPases consist of two structural domains, F(1) containing the extramembraneous catalytic core and F(0) containing the membrane proton channel, linked together by a central stalk and a peripheral stalk. During catalysis, ATP synthesis in the catalytic domain of F(1) is coupled via a rotary mechanism of the central stalk subunits to proton translocation.</text>
</comment>
<comment type="function">
    <text evidence="1">Component of the F(0) channel, it forms part of the peripheral stalk, linking F(1) to F(0).</text>
</comment>
<comment type="subunit">
    <text evidence="1">F-type ATPases have 2 components, F(1) - the catalytic core - and F(0) - the membrane proton channel. F(1) has five subunits: alpha(3), beta(3), gamma(1), delta(1), epsilon(1). F(0) has three main subunits: a(1), b(2) and c(10-14). The alpha and beta chains form an alternating ring which encloses part of the gamma chain. F(1) is attached to F(0) by a central stalk formed by the gamma and epsilon chains, while a peripheral stalk is formed by the delta and b chains.</text>
</comment>
<comment type="subcellular location">
    <subcellularLocation>
        <location evidence="1">Cell membrane</location>
        <topology evidence="1">Single-pass membrane protein</topology>
    </subcellularLocation>
</comment>
<comment type="similarity">
    <text evidence="1">Belongs to the ATPase B chain family.</text>
</comment>
<gene>
    <name evidence="1" type="primary">atpF</name>
    <name type="ordered locus">LVIS_1283</name>
</gene>
<name>ATPF_LEVBA</name>
<reference key="1">
    <citation type="journal article" date="2006" name="Proc. Natl. Acad. Sci. U.S.A.">
        <title>Comparative genomics of the lactic acid bacteria.</title>
        <authorList>
            <person name="Makarova K.S."/>
            <person name="Slesarev A."/>
            <person name="Wolf Y.I."/>
            <person name="Sorokin A."/>
            <person name="Mirkin B."/>
            <person name="Koonin E.V."/>
            <person name="Pavlov A."/>
            <person name="Pavlova N."/>
            <person name="Karamychev V."/>
            <person name="Polouchine N."/>
            <person name="Shakhova V."/>
            <person name="Grigoriev I."/>
            <person name="Lou Y."/>
            <person name="Rohksar D."/>
            <person name="Lucas S."/>
            <person name="Huang K."/>
            <person name="Goodstein D.M."/>
            <person name="Hawkins T."/>
            <person name="Plengvidhya V."/>
            <person name="Welker D."/>
            <person name="Hughes J."/>
            <person name="Goh Y."/>
            <person name="Benson A."/>
            <person name="Baldwin K."/>
            <person name="Lee J.-H."/>
            <person name="Diaz-Muniz I."/>
            <person name="Dosti B."/>
            <person name="Smeianov V."/>
            <person name="Wechter W."/>
            <person name="Barabote R."/>
            <person name="Lorca G."/>
            <person name="Altermann E."/>
            <person name="Barrangou R."/>
            <person name="Ganesan B."/>
            <person name="Xie Y."/>
            <person name="Rawsthorne H."/>
            <person name="Tamir D."/>
            <person name="Parker C."/>
            <person name="Breidt F."/>
            <person name="Broadbent J.R."/>
            <person name="Hutkins R."/>
            <person name="O'Sullivan D."/>
            <person name="Steele J."/>
            <person name="Unlu G."/>
            <person name="Saier M.H. Jr."/>
            <person name="Klaenhammer T."/>
            <person name="Richardson P."/>
            <person name="Kozyavkin S."/>
            <person name="Weimer B.C."/>
            <person name="Mills D.A."/>
        </authorList>
    </citation>
    <scope>NUCLEOTIDE SEQUENCE [LARGE SCALE GENOMIC DNA]</scope>
    <source>
        <strain>ATCC 367 / BCRC 12310 / CIP 105137 / JCM 1170 / LMG 11437 / NCIMB 947 / NCTC 947</strain>
    </source>
</reference>
<evidence type="ECO:0000255" key="1">
    <source>
        <dbReference type="HAMAP-Rule" id="MF_01398"/>
    </source>
</evidence>
<dbReference type="EMBL" id="CP000416">
    <property type="protein sequence ID" value="ABJ64388.1"/>
    <property type="molecule type" value="Genomic_DNA"/>
</dbReference>
<dbReference type="RefSeq" id="WP_011668152.1">
    <property type="nucleotide sequence ID" value="NC_008497.1"/>
</dbReference>
<dbReference type="SMR" id="Q03QY4"/>
<dbReference type="STRING" id="387344.LVIS_1283"/>
<dbReference type="DNASU" id="4414107"/>
<dbReference type="KEGG" id="lbr:LVIS_1283"/>
<dbReference type="PATRIC" id="fig|387344.15.peg.1223"/>
<dbReference type="eggNOG" id="COG0711">
    <property type="taxonomic scope" value="Bacteria"/>
</dbReference>
<dbReference type="HOGENOM" id="CLU_079215_4_2_9"/>
<dbReference type="Proteomes" id="UP000001652">
    <property type="component" value="Chromosome"/>
</dbReference>
<dbReference type="GO" id="GO:0005886">
    <property type="term" value="C:plasma membrane"/>
    <property type="evidence" value="ECO:0007669"/>
    <property type="project" value="UniProtKB-SubCell"/>
</dbReference>
<dbReference type="GO" id="GO:0045259">
    <property type="term" value="C:proton-transporting ATP synthase complex"/>
    <property type="evidence" value="ECO:0007669"/>
    <property type="project" value="UniProtKB-KW"/>
</dbReference>
<dbReference type="GO" id="GO:0046933">
    <property type="term" value="F:proton-transporting ATP synthase activity, rotational mechanism"/>
    <property type="evidence" value="ECO:0007669"/>
    <property type="project" value="UniProtKB-UniRule"/>
</dbReference>
<dbReference type="GO" id="GO:0046961">
    <property type="term" value="F:proton-transporting ATPase activity, rotational mechanism"/>
    <property type="evidence" value="ECO:0007669"/>
    <property type="project" value="TreeGrafter"/>
</dbReference>
<dbReference type="CDD" id="cd06503">
    <property type="entry name" value="ATP-synt_Fo_b"/>
    <property type="match status" value="1"/>
</dbReference>
<dbReference type="Gene3D" id="1.20.5.620">
    <property type="entry name" value="F1F0 ATP synthase subunit B, membrane domain"/>
    <property type="match status" value="1"/>
</dbReference>
<dbReference type="HAMAP" id="MF_01398">
    <property type="entry name" value="ATP_synth_b_bprime"/>
    <property type="match status" value="1"/>
</dbReference>
<dbReference type="InterPro" id="IPR028987">
    <property type="entry name" value="ATP_synth_B-like_membr_sf"/>
</dbReference>
<dbReference type="InterPro" id="IPR002146">
    <property type="entry name" value="ATP_synth_b/b'su_bac/chlpt"/>
</dbReference>
<dbReference type="InterPro" id="IPR005864">
    <property type="entry name" value="ATP_synth_F0_bsu_bac"/>
</dbReference>
<dbReference type="InterPro" id="IPR050059">
    <property type="entry name" value="ATP_synthase_B_chain"/>
</dbReference>
<dbReference type="NCBIfam" id="TIGR01144">
    <property type="entry name" value="ATP_synt_b"/>
    <property type="match status" value="1"/>
</dbReference>
<dbReference type="PANTHER" id="PTHR33445:SF1">
    <property type="entry name" value="ATP SYNTHASE SUBUNIT B"/>
    <property type="match status" value="1"/>
</dbReference>
<dbReference type="PANTHER" id="PTHR33445">
    <property type="entry name" value="ATP SYNTHASE SUBUNIT B', CHLOROPLASTIC"/>
    <property type="match status" value="1"/>
</dbReference>
<dbReference type="Pfam" id="PF00430">
    <property type="entry name" value="ATP-synt_B"/>
    <property type="match status" value="1"/>
</dbReference>
<dbReference type="SUPFAM" id="SSF81573">
    <property type="entry name" value="F1F0 ATP synthase subunit B, membrane domain"/>
    <property type="match status" value="1"/>
</dbReference>
<keyword id="KW-0066">ATP synthesis</keyword>
<keyword id="KW-1003">Cell membrane</keyword>
<keyword id="KW-0138">CF(0)</keyword>
<keyword id="KW-0375">Hydrogen ion transport</keyword>
<keyword id="KW-0406">Ion transport</keyword>
<keyword id="KW-0472">Membrane</keyword>
<keyword id="KW-1185">Reference proteome</keyword>
<keyword id="KW-0812">Transmembrane</keyword>
<keyword id="KW-1133">Transmembrane helix</keyword>
<keyword id="KW-0813">Transport</keyword>
<protein>
    <recommendedName>
        <fullName evidence="1">ATP synthase subunit b</fullName>
    </recommendedName>
    <alternativeName>
        <fullName evidence="1">ATP synthase F(0) sector subunit b</fullName>
    </alternativeName>
    <alternativeName>
        <fullName evidence="1">ATPase subunit I</fullName>
    </alternativeName>
    <alternativeName>
        <fullName evidence="1">F-type ATPase subunit b</fullName>
        <shortName evidence="1">F-ATPase subunit b</shortName>
    </alternativeName>
</protein>
<organism>
    <name type="scientific">Levilactobacillus brevis (strain ATCC 367 / BCRC 12310 / CIP 105137 / JCM 1170 / LMG 11437 / NCIMB 947 / NCTC 947)</name>
    <name type="common">Lactobacillus brevis</name>
    <dbReference type="NCBI Taxonomy" id="387344"/>
    <lineage>
        <taxon>Bacteria</taxon>
        <taxon>Bacillati</taxon>
        <taxon>Bacillota</taxon>
        <taxon>Bacilli</taxon>
        <taxon>Lactobacillales</taxon>
        <taxon>Lactobacillaceae</taxon>
        <taxon>Levilactobacillus</taxon>
    </lineage>
</organism>
<proteinExistence type="inferred from homology"/>